<reference key="1">
    <citation type="journal article" date="1989" name="Plant Mol. Biol.">
        <title>Isolation and characterization of cDNA clones encoding the 17.9 and 8.1 kDa subunits of photosystem I from Chlamydomonas reinhardtii.</title>
        <authorList>
            <person name="Franzen L.-G."/>
            <person name="Frank G."/>
            <person name="Zuber H."/>
            <person name="Rochaix J.-D."/>
        </authorList>
    </citation>
    <scope>NUCLEOTIDE SEQUENCE [MRNA]</scope>
    <scope>PARTIAL PROTEIN SEQUENCE</scope>
    <source>
        <strain>137c / CC-125</strain>
    </source>
</reference>
<reference key="2">
    <citation type="journal article" date="2002" name="Plant Cell">
        <title>Loss of Albino3 leads to the specific depletion of the light-harvesting system.</title>
        <authorList>
            <person name="Bellafiore S."/>
            <person name="Ferris P."/>
            <person name="Naver H."/>
            <person name="Goehre V."/>
            <person name="Rochaix J.-D."/>
        </authorList>
    </citation>
    <scope>INTERACTION WITH ALB3.1</scope>
</reference>
<dbReference type="EMBL" id="X13496">
    <property type="protein sequence ID" value="CAA31850.1"/>
    <property type="molecule type" value="mRNA"/>
</dbReference>
<dbReference type="PIR" id="S04134">
    <property type="entry name" value="S04134"/>
</dbReference>
<dbReference type="RefSeq" id="XP_001702611.1">
    <property type="nucleotide sequence ID" value="XM_001702559.1"/>
</dbReference>
<dbReference type="PDB" id="6IJJ">
    <property type="method" value="EM"/>
    <property type="resolution" value="2.89 A"/>
    <property type="chains" value="E=1-97"/>
</dbReference>
<dbReference type="PDB" id="6IJO">
    <property type="method" value="EM"/>
    <property type="resolution" value="3.30 A"/>
    <property type="chains" value="E=1-97"/>
</dbReference>
<dbReference type="PDB" id="6JO5">
    <property type="method" value="EM"/>
    <property type="resolution" value="2.90 A"/>
    <property type="chains" value="E=25-97"/>
</dbReference>
<dbReference type="PDB" id="6JO6">
    <property type="method" value="EM"/>
    <property type="resolution" value="2.90 A"/>
    <property type="chains" value="E=25-97"/>
</dbReference>
<dbReference type="PDB" id="7BGI">
    <property type="method" value="EM"/>
    <property type="resolution" value="2.54 A"/>
    <property type="chains" value="E=34-96"/>
</dbReference>
<dbReference type="PDB" id="7BLX">
    <property type="method" value="EM"/>
    <property type="resolution" value="3.15 A"/>
    <property type="chains" value="E=34-96"/>
</dbReference>
<dbReference type="PDB" id="7D0J">
    <property type="method" value="EM"/>
    <property type="resolution" value="3.42 A"/>
    <property type="chains" value="E=34-96"/>
</dbReference>
<dbReference type="PDB" id="7DZ7">
    <property type="method" value="EM"/>
    <property type="resolution" value="2.84 A"/>
    <property type="chains" value="E=1-97"/>
</dbReference>
<dbReference type="PDB" id="7DZ8">
    <property type="method" value="EM"/>
    <property type="resolution" value="3.16 A"/>
    <property type="chains" value="E=1-97"/>
</dbReference>
<dbReference type="PDB" id="7O01">
    <property type="method" value="EM"/>
    <property type="resolution" value="17.10 A"/>
    <property type="chains" value="E/e=34-96"/>
</dbReference>
<dbReference type="PDB" id="7R3K">
    <property type="method" value="EM"/>
    <property type="resolution" value="2.52 A"/>
    <property type="chains" value="E=1-97"/>
</dbReference>
<dbReference type="PDB" id="7WYI">
    <property type="method" value="EM"/>
    <property type="resolution" value="3.90 A"/>
    <property type="chains" value="E=1-97"/>
</dbReference>
<dbReference type="PDB" id="7WZN">
    <property type="method" value="EM"/>
    <property type="resolution" value="4.90 A"/>
    <property type="chains" value="E=1-97"/>
</dbReference>
<dbReference type="PDB" id="7ZQ9">
    <property type="method" value="EM"/>
    <property type="resolution" value="2.74 A"/>
    <property type="chains" value="E=1-97"/>
</dbReference>
<dbReference type="PDB" id="7ZQC">
    <property type="method" value="EM"/>
    <property type="resolution" value="2.31 A"/>
    <property type="chains" value="E=1-97"/>
</dbReference>
<dbReference type="PDB" id="7ZQD">
    <property type="method" value="EM"/>
    <property type="resolution" value="2.97 A"/>
    <property type="chains" value="E/E2=1-97"/>
</dbReference>
<dbReference type="PDB" id="8H2U">
    <property type="method" value="X-ray"/>
    <property type="resolution" value="3.40 A"/>
    <property type="chains" value="E=1-97"/>
</dbReference>
<dbReference type="PDBsum" id="6IJJ"/>
<dbReference type="PDBsum" id="6IJO"/>
<dbReference type="PDBsum" id="6JO5"/>
<dbReference type="PDBsum" id="6JO6"/>
<dbReference type="PDBsum" id="7BGI"/>
<dbReference type="PDBsum" id="7BLX"/>
<dbReference type="PDBsum" id="7D0J"/>
<dbReference type="PDBsum" id="7DZ7"/>
<dbReference type="PDBsum" id="7DZ8"/>
<dbReference type="PDBsum" id="7O01"/>
<dbReference type="PDBsum" id="7R3K"/>
<dbReference type="PDBsum" id="7WYI"/>
<dbReference type="PDBsum" id="7WZN"/>
<dbReference type="PDBsum" id="7ZQ9"/>
<dbReference type="PDBsum" id="7ZQC"/>
<dbReference type="PDBsum" id="7ZQD"/>
<dbReference type="PDBsum" id="8H2U"/>
<dbReference type="EMDB" id="EMD-12180"/>
<dbReference type="EMDB" id="EMD-12227"/>
<dbReference type="EMDB" id="EMD-12672"/>
<dbReference type="EMDB" id="EMD-14248"/>
<dbReference type="EMDB" id="EMD-14867"/>
<dbReference type="EMDB" id="EMD-14870"/>
<dbReference type="EMDB" id="EMD-14871"/>
<dbReference type="EMDB" id="EMD-30536"/>
<dbReference type="EMDB" id="EMD-30925"/>
<dbReference type="EMDB" id="EMD-30926"/>
<dbReference type="EMDB" id="EMD-32892"/>
<dbReference type="EMDB" id="EMD-32907"/>
<dbReference type="EMDB" id="EMD-9853"/>
<dbReference type="EMDB" id="EMD-9854"/>
<dbReference type="SMR" id="P12352"/>
<dbReference type="IntAct" id="P12352">
    <property type="interactions" value="5"/>
</dbReference>
<dbReference type="PaxDb" id="3055-EDP06390"/>
<dbReference type="ProMEX" id="P12352"/>
<dbReference type="EnsemblPlants" id="PNW77053">
    <property type="protein sequence ID" value="PNW77053"/>
    <property type="gene ID" value="CHLRE_10g420350v5"/>
</dbReference>
<dbReference type="Gramene" id="PNW77053">
    <property type="protein sequence ID" value="PNW77053"/>
    <property type="gene ID" value="CHLRE_10g420350v5"/>
</dbReference>
<dbReference type="KEGG" id="cre:CHLRE_10g420350v5"/>
<dbReference type="eggNOG" id="ENOG502S1U2">
    <property type="taxonomic scope" value="Eukaryota"/>
</dbReference>
<dbReference type="HOGENOM" id="CLU_136462_1_0_1"/>
<dbReference type="OMA" id="SYWFNDY"/>
<dbReference type="OrthoDB" id="2161449at2759"/>
<dbReference type="BioCyc" id="CHLAMY:CHLREDRAFT_76146-MONOMER"/>
<dbReference type="BioCyc" id="MetaCyc:CHLREDRAFT_76146-MONOMER"/>
<dbReference type="GO" id="GO:0009535">
    <property type="term" value="C:chloroplast thylakoid membrane"/>
    <property type="evidence" value="ECO:0007669"/>
    <property type="project" value="UniProtKB-SubCell"/>
</dbReference>
<dbReference type="GO" id="GO:0009538">
    <property type="term" value="C:photosystem I reaction center"/>
    <property type="evidence" value="ECO:0007669"/>
    <property type="project" value="InterPro"/>
</dbReference>
<dbReference type="GO" id="GO:0015979">
    <property type="term" value="P:photosynthesis"/>
    <property type="evidence" value="ECO:0007669"/>
    <property type="project" value="UniProtKB-KW"/>
</dbReference>
<dbReference type="Gene3D" id="2.30.30.50">
    <property type="match status" value="1"/>
</dbReference>
<dbReference type="InterPro" id="IPR008990">
    <property type="entry name" value="Elect_transpt_acc-like_dom_sf"/>
</dbReference>
<dbReference type="InterPro" id="IPR003375">
    <property type="entry name" value="PSI_PsaE"/>
</dbReference>
<dbReference type="NCBIfam" id="NF002745">
    <property type="entry name" value="PRK02749.1"/>
    <property type="match status" value="1"/>
</dbReference>
<dbReference type="PANTHER" id="PTHR34549">
    <property type="entry name" value="PHOTOSYSTEM I REACTION CENTER SUBUNIT IV A, CHLOROPLASTIC-RELATED"/>
    <property type="match status" value="1"/>
</dbReference>
<dbReference type="PANTHER" id="PTHR34549:SF2">
    <property type="entry name" value="PHOTOSYSTEM I SUBUNIT IV"/>
    <property type="match status" value="1"/>
</dbReference>
<dbReference type="Pfam" id="PF02427">
    <property type="entry name" value="PSI_PsaE"/>
    <property type="match status" value="1"/>
</dbReference>
<dbReference type="SUPFAM" id="SSF50090">
    <property type="entry name" value="Electron transport accessory proteins"/>
    <property type="match status" value="1"/>
</dbReference>
<proteinExistence type="evidence at protein level"/>
<feature type="transit peptide" description="Chloroplast">
    <location>
        <begin position="1"/>
        <end position="24"/>
    </location>
</feature>
<feature type="chain" id="PRO_0000029380" description="Photosystem I reaction center subunit IV, chloroplastic">
    <location>
        <begin position="25"/>
        <end position="97"/>
    </location>
</feature>
<feature type="strand" evidence="6">
    <location>
        <begin position="42"/>
        <end position="45"/>
    </location>
</feature>
<feature type="turn" evidence="4">
    <location>
        <begin position="51"/>
        <end position="54"/>
    </location>
</feature>
<feature type="strand" evidence="6">
    <location>
        <begin position="56"/>
        <end position="62"/>
    </location>
</feature>
<feature type="strand" evidence="5">
    <location>
        <begin position="64"/>
        <end position="66"/>
    </location>
</feature>
<feature type="strand" evidence="6">
    <location>
        <begin position="71"/>
        <end position="74"/>
    </location>
</feature>
<feature type="strand" evidence="6">
    <location>
        <begin position="85"/>
        <end position="88"/>
    </location>
</feature>
<feature type="strand" evidence="6">
    <location>
        <begin position="93"/>
        <end position="95"/>
    </location>
</feature>
<name>PSAE_CHLRE</name>
<gene>
    <name type="primary">PSAE</name>
</gene>
<accession>P12352</accession>
<comment type="function">
    <text evidence="1">Stabilizes the interaction between PsaC and the PSI core, assists the docking of the ferredoxin to PSI and interacts with ferredoxin-NADP oxidoreductase.</text>
</comment>
<comment type="subunit">
    <text evidence="2">Interacts with ALB3.1, which is essential for its insertion into thylakoid membrane.</text>
</comment>
<comment type="subcellular location">
    <subcellularLocation>
        <location evidence="1">Plastid</location>
        <location evidence="1">Chloroplast thylakoid membrane</location>
        <topology evidence="1">Peripheral membrane protein</topology>
    </subcellularLocation>
</comment>
<comment type="similarity">
    <text evidence="3">Belongs to the PsaE family.</text>
</comment>
<protein>
    <recommendedName>
        <fullName>Photosystem I reaction center subunit IV, chloroplastic</fullName>
        <shortName>PSI-E</shortName>
    </recommendedName>
    <alternativeName>
        <fullName>P30 protein</fullName>
    </alternativeName>
    <alternativeName>
        <fullName>Photosystem I 8.1 kDa protein</fullName>
    </alternativeName>
</protein>
<evidence type="ECO:0000250" key="1"/>
<evidence type="ECO:0000269" key="2">
    <source>
    </source>
</evidence>
<evidence type="ECO:0000305" key="3"/>
<evidence type="ECO:0007829" key="4">
    <source>
        <dbReference type="PDB" id="6IJJ"/>
    </source>
</evidence>
<evidence type="ECO:0007829" key="5">
    <source>
        <dbReference type="PDB" id="7BGI"/>
    </source>
</evidence>
<evidence type="ECO:0007829" key="6">
    <source>
        <dbReference type="PDB" id="7R3K"/>
    </source>
</evidence>
<organism>
    <name type="scientific">Chlamydomonas reinhardtii</name>
    <name type="common">Chlamydomonas smithii</name>
    <dbReference type="NCBI Taxonomy" id="3055"/>
    <lineage>
        <taxon>Eukaryota</taxon>
        <taxon>Viridiplantae</taxon>
        <taxon>Chlorophyta</taxon>
        <taxon>core chlorophytes</taxon>
        <taxon>Chlorophyceae</taxon>
        <taxon>CS clade</taxon>
        <taxon>Chlamydomonadales</taxon>
        <taxon>Chlamydomonadaceae</taxon>
        <taxon>Chlamydomonas</taxon>
    </lineage>
</organism>
<keyword id="KW-0002">3D-structure</keyword>
<keyword id="KW-0150">Chloroplast</keyword>
<keyword id="KW-0903">Direct protein sequencing</keyword>
<keyword id="KW-0472">Membrane</keyword>
<keyword id="KW-0602">Photosynthesis</keyword>
<keyword id="KW-0603">Photosystem I</keyword>
<keyword id="KW-0934">Plastid</keyword>
<keyword id="KW-0793">Thylakoid</keyword>
<keyword id="KW-0809">Transit peptide</keyword>
<sequence>MQALSSRVNIAAKPQRAQRLVVRAEEVKAAPKKEVGPKRGSLVKILRPESYWFNQVGKVVSVDQSGVRYPVVVRFENQNYAGVTTNNYALDEVVAAK</sequence>